<keyword id="KW-0067">ATP-binding</keyword>
<keyword id="KW-0997">Cell inner membrane</keyword>
<keyword id="KW-1003">Cell membrane</keyword>
<keyword id="KW-0472">Membrane</keyword>
<keyword id="KW-0547">Nucleotide-binding</keyword>
<keyword id="KW-0677">Repeat</keyword>
<keyword id="KW-0762">Sugar transport</keyword>
<keyword id="KW-1278">Translocase</keyword>
<keyword id="KW-0813">Transport</keyword>
<evidence type="ECO:0000255" key="1">
    <source>
        <dbReference type="HAMAP-Rule" id="MF_01716"/>
    </source>
</evidence>
<accession>Q87H79</accession>
<sequence length="501" mass="54732">MTQAILQLSEIEKAFPGVKALDKASLNVYPGRVMALMGENGAGKSTLMKVLTGIYHMDAGSIQYQGQPAAFKGPRDSQEAGISIIHQELNLIPELTIAENIFLGREFTGSMGRIQWSKMYAEADRLLQRLNVKHSSKTLLGDLSLGEQQMVEIAKALSFESKVIIMDEPTDALTDTETESLFKVINELREQGCGIVYISHRLKEIFEICDDITVLRDGKFIGECRVADTDEDGLIEMMVGRKLEEQYPRIDVKHGETCLEVVGLTGSGVHDVSFTLKRGEILGISGLMGAGRTELMKVIYGALPSEHGVINLDNKTINPVSPQDGLANGIAYISEDRKGDGLVLGLSVKENMSLCALDKLTKGVQIQHGEEVIAVEDFIKLFNIKTPTRDQIIGNLSGGNQQKVAIAKGLMTKPKVLILDEPTRGVDVGAKKEIYQLINKFKADGMSIILVSSEMPEVLGMSDRILVMHEGRITGEFDAKDADQEKLLACAVGKKINEEAA</sequence>
<feature type="chain" id="PRO_0000261117" description="Ribose import ATP-binding protein RbsA">
    <location>
        <begin position="1"/>
        <end position="501"/>
    </location>
</feature>
<feature type="domain" description="ABC transporter 1" evidence="1">
    <location>
        <begin position="6"/>
        <end position="242"/>
    </location>
</feature>
<feature type="domain" description="ABC transporter 2" evidence="1">
    <location>
        <begin position="253"/>
        <end position="495"/>
    </location>
</feature>
<feature type="binding site" evidence="1">
    <location>
        <begin position="38"/>
        <end position="45"/>
    </location>
    <ligand>
        <name>ATP</name>
        <dbReference type="ChEBI" id="CHEBI:30616"/>
    </ligand>
</feature>
<name>RBSA_VIBPA</name>
<gene>
    <name evidence="1" type="primary">rbsA</name>
    <name type="ordered locus">VPA1086</name>
</gene>
<organism>
    <name type="scientific">Vibrio parahaemolyticus serotype O3:K6 (strain RIMD 2210633)</name>
    <dbReference type="NCBI Taxonomy" id="223926"/>
    <lineage>
        <taxon>Bacteria</taxon>
        <taxon>Pseudomonadati</taxon>
        <taxon>Pseudomonadota</taxon>
        <taxon>Gammaproteobacteria</taxon>
        <taxon>Vibrionales</taxon>
        <taxon>Vibrionaceae</taxon>
        <taxon>Vibrio</taxon>
    </lineage>
</organism>
<protein>
    <recommendedName>
        <fullName evidence="1">Ribose import ATP-binding protein RbsA</fullName>
        <ecNumber evidence="1">7.5.2.7</ecNumber>
    </recommendedName>
</protein>
<reference key="1">
    <citation type="journal article" date="2003" name="Lancet">
        <title>Genome sequence of Vibrio parahaemolyticus: a pathogenic mechanism distinct from that of V. cholerae.</title>
        <authorList>
            <person name="Makino K."/>
            <person name="Oshima K."/>
            <person name="Kurokawa K."/>
            <person name="Yokoyama K."/>
            <person name="Uda T."/>
            <person name="Tagomori K."/>
            <person name="Iijima Y."/>
            <person name="Najima M."/>
            <person name="Nakano M."/>
            <person name="Yamashita A."/>
            <person name="Kubota Y."/>
            <person name="Kimura S."/>
            <person name="Yasunaga T."/>
            <person name="Honda T."/>
            <person name="Shinagawa H."/>
            <person name="Hattori M."/>
            <person name="Iida T."/>
        </authorList>
    </citation>
    <scope>NUCLEOTIDE SEQUENCE [LARGE SCALE GENOMIC DNA]</scope>
    <source>
        <strain>RIMD 2210633</strain>
    </source>
</reference>
<comment type="function">
    <text evidence="1">Part of the ABC transporter complex RbsABC involved in ribose import. Responsible for energy coupling to the transport system.</text>
</comment>
<comment type="catalytic activity">
    <reaction evidence="1">
        <text>D-ribose(out) + ATP + H2O = D-ribose(in) + ADP + phosphate + H(+)</text>
        <dbReference type="Rhea" id="RHEA:29903"/>
        <dbReference type="ChEBI" id="CHEBI:15377"/>
        <dbReference type="ChEBI" id="CHEBI:15378"/>
        <dbReference type="ChEBI" id="CHEBI:30616"/>
        <dbReference type="ChEBI" id="CHEBI:43474"/>
        <dbReference type="ChEBI" id="CHEBI:47013"/>
        <dbReference type="ChEBI" id="CHEBI:456216"/>
        <dbReference type="EC" id="7.5.2.7"/>
    </reaction>
</comment>
<comment type="subunit">
    <text evidence="1">The complex is composed of an ATP-binding protein (RbsA), two transmembrane proteins (RbsC) and a solute-binding protein (RbsB).</text>
</comment>
<comment type="subcellular location">
    <subcellularLocation>
        <location evidence="1">Cell inner membrane</location>
        <topology evidence="1">Peripheral membrane protein</topology>
    </subcellularLocation>
</comment>
<comment type="similarity">
    <text evidence="1">Belongs to the ABC transporter superfamily. Ribose importer (TC 3.A.1.2.1) family.</text>
</comment>
<proteinExistence type="inferred from homology"/>
<dbReference type="EC" id="7.5.2.7" evidence="1"/>
<dbReference type="EMBL" id="BA000032">
    <property type="protein sequence ID" value="BAC62429.1"/>
    <property type="molecule type" value="Genomic_DNA"/>
</dbReference>
<dbReference type="RefSeq" id="NP_800596.1">
    <property type="nucleotide sequence ID" value="NC_004605.1"/>
</dbReference>
<dbReference type="RefSeq" id="WP_005463701.1">
    <property type="nucleotide sequence ID" value="NC_004605.1"/>
</dbReference>
<dbReference type="SMR" id="Q87H79"/>
<dbReference type="GeneID" id="1191781"/>
<dbReference type="KEGG" id="vpa:VPA1086"/>
<dbReference type="PATRIC" id="fig|223926.6.peg.4014"/>
<dbReference type="eggNOG" id="COG1129">
    <property type="taxonomic scope" value="Bacteria"/>
</dbReference>
<dbReference type="HOGENOM" id="CLU_000604_92_3_6"/>
<dbReference type="Proteomes" id="UP000002493">
    <property type="component" value="Chromosome 2"/>
</dbReference>
<dbReference type="GO" id="GO:0005886">
    <property type="term" value="C:plasma membrane"/>
    <property type="evidence" value="ECO:0007669"/>
    <property type="project" value="UniProtKB-SubCell"/>
</dbReference>
<dbReference type="GO" id="GO:0015611">
    <property type="term" value="F:ABC-type D-ribose transporter activity"/>
    <property type="evidence" value="ECO:0007669"/>
    <property type="project" value="UniProtKB-EC"/>
</dbReference>
<dbReference type="GO" id="GO:0005524">
    <property type="term" value="F:ATP binding"/>
    <property type="evidence" value="ECO:0007669"/>
    <property type="project" value="UniProtKB-KW"/>
</dbReference>
<dbReference type="GO" id="GO:0016887">
    <property type="term" value="F:ATP hydrolysis activity"/>
    <property type="evidence" value="ECO:0007669"/>
    <property type="project" value="InterPro"/>
</dbReference>
<dbReference type="CDD" id="cd03216">
    <property type="entry name" value="ABC_Carb_Monos_I"/>
    <property type="match status" value="1"/>
</dbReference>
<dbReference type="CDD" id="cd03215">
    <property type="entry name" value="ABC_Carb_Monos_II"/>
    <property type="match status" value="1"/>
</dbReference>
<dbReference type="FunFam" id="3.40.50.300:FF:000126">
    <property type="entry name" value="Galactose/methyl galactoside import ATP-binding protein MglA"/>
    <property type="match status" value="1"/>
</dbReference>
<dbReference type="FunFam" id="3.40.50.300:FF:000127">
    <property type="entry name" value="Ribose import ATP-binding protein RbsA"/>
    <property type="match status" value="1"/>
</dbReference>
<dbReference type="Gene3D" id="3.40.50.300">
    <property type="entry name" value="P-loop containing nucleotide triphosphate hydrolases"/>
    <property type="match status" value="2"/>
</dbReference>
<dbReference type="InterPro" id="IPR003593">
    <property type="entry name" value="AAA+_ATPase"/>
</dbReference>
<dbReference type="InterPro" id="IPR050107">
    <property type="entry name" value="ABC_carbohydrate_import_ATPase"/>
</dbReference>
<dbReference type="InterPro" id="IPR003439">
    <property type="entry name" value="ABC_transporter-like_ATP-bd"/>
</dbReference>
<dbReference type="InterPro" id="IPR017871">
    <property type="entry name" value="ABC_transporter-like_CS"/>
</dbReference>
<dbReference type="InterPro" id="IPR027417">
    <property type="entry name" value="P-loop_NTPase"/>
</dbReference>
<dbReference type="NCBIfam" id="NF008030">
    <property type="entry name" value="PRK10762.1"/>
    <property type="match status" value="1"/>
</dbReference>
<dbReference type="PANTHER" id="PTHR43790">
    <property type="entry name" value="CARBOHYDRATE TRANSPORT ATP-BINDING PROTEIN MG119-RELATED"/>
    <property type="match status" value="1"/>
</dbReference>
<dbReference type="PANTHER" id="PTHR43790:SF3">
    <property type="entry name" value="D-ALLOSE IMPORT ATP-BINDING PROTEIN ALSA-RELATED"/>
    <property type="match status" value="1"/>
</dbReference>
<dbReference type="Pfam" id="PF00005">
    <property type="entry name" value="ABC_tran"/>
    <property type="match status" value="2"/>
</dbReference>
<dbReference type="SMART" id="SM00382">
    <property type="entry name" value="AAA"/>
    <property type="match status" value="2"/>
</dbReference>
<dbReference type="SUPFAM" id="SSF52540">
    <property type="entry name" value="P-loop containing nucleoside triphosphate hydrolases"/>
    <property type="match status" value="2"/>
</dbReference>
<dbReference type="PROSITE" id="PS00211">
    <property type="entry name" value="ABC_TRANSPORTER_1"/>
    <property type="match status" value="2"/>
</dbReference>
<dbReference type="PROSITE" id="PS50893">
    <property type="entry name" value="ABC_TRANSPORTER_2"/>
    <property type="match status" value="1"/>
</dbReference>
<dbReference type="PROSITE" id="PS51254">
    <property type="entry name" value="RBSA"/>
    <property type="match status" value="1"/>
</dbReference>